<reference key="1">
    <citation type="journal article" date="2009" name="PLoS Genet.">
        <title>Organised genome dynamics in the Escherichia coli species results in highly diverse adaptive paths.</title>
        <authorList>
            <person name="Touchon M."/>
            <person name="Hoede C."/>
            <person name="Tenaillon O."/>
            <person name="Barbe V."/>
            <person name="Baeriswyl S."/>
            <person name="Bidet P."/>
            <person name="Bingen E."/>
            <person name="Bonacorsi S."/>
            <person name="Bouchier C."/>
            <person name="Bouvet O."/>
            <person name="Calteau A."/>
            <person name="Chiapello H."/>
            <person name="Clermont O."/>
            <person name="Cruveiller S."/>
            <person name="Danchin A."/>
            <person name="Diard M."/>
            <person name="Dossat C."/>
            <person name="Karoui M.E."/>
            <person name="Frapy E."/>
            <person name="Garry L."/>
            <person name="Ghigo J.M."/>
            <person name="Gilles A.M."/>
            <person name="Johnson J."/>
            <person name="Le Bouguenec C."/>
            <person name="Lescat M."/>
            <person name="Mangenot S."/>
            <person name="Martinez-Jehanne V."/>
            <person name="Matic I."/>
            <person name="Nassif X."/>
            <person name="Oztas S."/>
            <person name="Petit M.A."/>
            <person name="Pichon C."/>
            <person name="Rouy Z."/>
            <person name="Ruf C.S."/>
            <person name="Schneider D."/>
            <person name="Tourret J."/>
            <person name="Vacherie B."/>
            <person name="Vallenet D."/>
            <person name="Medigue C."/>
            <person name="Rocha E.P.C."/>
            <person name="Denamur E."/>
        </authorList>
    </citation>
    <scope>NUCLEOTIDE SEQUENCE [LARGE SCALE GENOMIC DNA]</scope>
    <source>
        <strain>UMN026 / ExPEC</strain>
    </source>
</reference>
<gene>
    <name evidence="2" type="primary">infB</name>
    <name type="ordered locus">ECUMN_3650</name>
</gene>
<comment type="function">
    <text evidence="2">One of the essential components for the initiation of protein synthesis. Protects formylmethionyl-tRNA from spontaneous hydrolysis and promotes its binding to the 30S ribosomal subunits. Also involved in the hydrolysis of GTP during the formation of the 70S ribosomal complex.</text>
</comment>
<comment type="subcellular location">
    <subcellularLocation>
        <location evidence="2">Cytoplasm</location>
    </subcellularLocation>
</comment>
<comment type="similarity">
    <text evidence="2">Belongs to the TRAFAC class translation factor GTPase superfamily. Classic translation factor GTPase family. IF-2 subfamily.</text>
</comment>
<evidence type="ECO:0000250" key="1"/>
<evidence type="ECO:0000255" key="2">
    <source>
        <dbReference type="HAMAP-Rule" id="MF_00100"/>
    </source>
</evidence>
<evidence type="ECO:0000256" key="3">
    <source>
        <dbReference type="SAM" id="MobiDB-lite"/>
    </source>
</evidence>
<keyword id="KW-0007">Acetylation</keyword>
<keyword id="KW-0963">Cytoplasm</keyword>
<keyword id="KW-0342">GTP-binding</keyword>
<keyword id="KW-0396">Initiation factor</keyword>
<keyword id="KW-0547">Nucleotide-binding</keyword>
<keyword id="KW-0648">Protein biosynthesis</keyword>
<organism>
    <name type="scientific">Escherichia coli O17:K52:H18 (strain UMN026 / ExPEC)</name>
    <dbReference type="NCBI Taxonomy" id="585056"/>
    <lineage>
        <taxon>Bacteria</taxon>
        <taxon>Pseudomonadati</taxon>
        <taxon>Pseudomonadota</taxon>
        <taxon>Gammaproteobacteria</taxon>
        <taxon>Enterobacterales</taxon>
        <taxon>Enterobacteriaceae</taxon>
        <taxon>Escherichia</taxon>
    </lineage>
</organism>
<protein>
    <recommendedName>
        <fullName evidence="2">Translation initiation factor IF-2</fullName>
    </recommendedName>
</protein>
<name>IF2_ECOLU</name>
<dbReference type="EMBL" id="CU928163">
    <property type="protein sequence ID" value="CAR14804.1"/>
    <property type="molecule type" value="Genomic_DNA"/>
</dbReference>
<dbReference type="RefSeq" id="WP_000133044.1">
    <property type="nucleotide sequence ID" value="NC_011751.1"/>
</dbReference>
<dbReference type="RefSeq" id="YP_002414309.1">
    <property type="nucleotide sequence ID" value="NC_011751.1"/>
</dbReference>
<dbReference type="SMR" id="B7NDF4"/>
<dbReference type="STRING" id="585056.ECUMN_3650"/>
<dbReference type="GeneID" id="75206024"/>
<dbReference type="KEGG" id="eum:ECUMN_3650"/>
<dbReference type="PATRIC" id="fig|585056.7.peg.3830"/>
<dbReference type="HOGENOM" id="CLU_006301_6_3_6"/>
<dbReference type="Proteomes" id="UP000007097">
    <property type="component" value="Chromosome"/>
</dbReference>
<dbReference type="GO" id="GO:0005829">
    <property type="term" value="C:cytosol"/>
    <property type="evidence" value="ECO:0007669"/>
    <property type="project" value="TreeGrafter"/>
</dbReference>
<dbReference type="GO" id="GO:0005525">
    <property type="term" value="F:GTP binding"/>
    <property type="evidence" value="ECO:0007669"/>
    <property type="project" value="UniProtKB-KW"/>
</dbReference>
<dbReference type="GO" id="GO:0003924">
    <property type="term" value="F:GTPase activity"/>
    <property type="evidence" value="ECO:0007669"/>
    <property type="project" value="UniProtKB-UniRule"/>
</dbReference>
<dbReference type="GO" id="GO:0097216">
    <property type="term" value="F:guanosine tetraphosphate binding"/>
    <property type="evidence" value="ECO:0007669"/>
    <property type="project" value="UniProtKB-ARBA"/>
</dbReference>
<dbReference type="GO" id="GO:0003743">
    <property type="term" value="F:translation initiation factor activity"/>
    <property type="evidence" value="ECO:0007669"/>
    <property type="project" value="UniProtKB-UniRule"/>
</dbReference>
<dbReference type="CDD" id="cd01887">
    <property type="entry name" value="IF2_eIF5B"/>
    <property type="match status" value="1"/>
</dbReference>
<dbReference type="CDD" id="cd03702">
    <property type="entry name" value="IF2_mtIF2_II"/>
    <property type="match status" value="1"/>
</dbReference>
<dbReference type="CDD" id="cd03692">
    <property type="entry name" value="mtIF2_IVc"/>
    <property type="match status" value="1"/>
</dbReference>
<dbReference type="FunFam" id="2.40.30.10:FF:000007">
    <property type="entry name" value="Translation initiation factor IF-2"/>
    <property type="match status" value="1"/>
</dbReference>
<dbReference type="FunFam" id="2.40.30.10:FF:000008">
    <property type="entry name" value="Translation initiation factor IF-2"/>
    <property type="match status" value="1"/>
</dbReference>
<dbReference type="FunFam" id="3.30.56.50:FF:000001">
    <property type="entry name" value="Translation initiation factor IF-2"/>
    <property type="match status" value="1"/>
</dbReference>
<dbReference type="FunFam" id="3.40.50.10050:FF:000001">
    <property type="entry name" value="Translation initiation factor IF-2"/>
    <property type="match status" value="1"/>
</dbReference>
<dbReference type="FunFam" id="3.40.50.300:FF:000019">
    <property type="entry name" value="Translation initiation factor IF-2"/>
    <property type="match status" value="1"/>
</dbReference>
<dbReference type="Gene3D" id="3.40.50.300">
    <property type="entry name" value="P-loop containing nucleotide triphosphate hydrolases"/>
    <property type="match status" value="1"/>
</dbReference>
<dbReference type="Gene3D" id="3.30.56.50">
    <property type="entry name" value="Putative DNA-binding domain, N-terminal subdomain of bacterial translation initiation factor IF2"/>
    <property type="match status" value="1"/>
</dbReference>
<dbReference type="Gene3D" id="2.40.30.10">
    <property type="entry name" value="Translation factors"/>
    <property type="match status" value="2"/>
</dbReference>
<dbReference type="Gene3D" id="3.40.50.10050">
    <property type="entry name" value="Translation initiation factor IF- 2, domain 3"/>
    <property type="match status" value="1"/>
</dbReference>
<dbReference type="HAMAP" id="MF_00100_B">
    <property type="entry name" value="IF_2_B"/>
    <property type="match status" value="1"/>
</dbReference>
<dbReference type="InterPro" id="IPR009061">
    <property type="entry name" value="DNA-bd_dom_put_sf"/>
</dbReference>
<dbReference type="InterPro" id="IPR053905">
    <property type="entry name" value="EF-G-like_DII"/>
</dbReference>
<dbReference type="InterPro" id="IPR004161">
    <property type="entry name" value="EFTu-like_2"/>
</dbReference>
<dbReference type="InterPro" id="IPR013575">
    <property type="entry name" value="IF2_assoc_dom_bac"/>
</dbReference>
<dbReference type="InterPro" id="IPR044145">
    <property type="entry name" value="IF2_II"/>
</dbReference>
<dbReference type="InterPro" id="IPR006847">
    <property type="entry name" value="IF2_N"/>
</dbReference>
<dbReference type="InterPro" id="IPR027417">
    <property type="entry name" value="P-loop_NTPase"/>
</dbReference>
<dbReference type="InterPro" id="IPR005225">
    <property type="entry name" value="Small_GTP-bd"/>
</dbReference>
<dbReference type="InterPro" id="IPR000795">
    <property type="entry name" value="T_Tr_GTP-bd_dom"/>
</dbReference>
<dbReference type="InterPro" id="IPR000178">
    <property type="entry name" value="TF_IF2_bacterial-like"/>
</dbReference>
<dbReference type="InterPro" id="IPR015760">
    <property type="entry name" value="TIF_IF2"/>
</dbReference>
<dbReference type="InterPro" id="IPR023115">
    <property type="entry name" value="TIF_IF2_dom3"/>
</dbReference>
<dbReference type="InterPro" id="IPR036925">
    <property type="entry name" value="TIF_IF2_dom3_sf"/>
</dbReference>
<dbReference type="InterPro" id="IPR009000">
    <property type="entry name" value="Transl_B-barrel_sf"/>
</dbReference>
<dbReference type="NCBIfam" id="TIGR00487">
    <property type="entry name" value="IF-2"/>
    <property type="match status" value="1"/>
</dbReference>
<dbReference type="NCBIfam" id="TIGR00231">
    <property type="entry name" value="small_GTP"/>
    <property type="match status" value="1"/>
</dbReference>
<dbReference type="PANTHER" id="PTHR43381:SF5">
    <property type="entry name" value="TR-TYPE G DOMAIN-CONTAINING PROTEIN"/>
    <property type="match status" value="1"/>
</dbReference>
<dbReference type="PANTHER" id="PTHR43381">
    <property type="entry name" value="TRANSLATION INITIATION FACTOR IF-2-RELATED"/>
    <property type="match status" value="1"/>
</dbReference>
<dbReference type="Pfam" id="PF22042">
    <property type="entry name" value="EF-G_D2"/>
    <property type="match status" value="1"/>
</dbReference>
<dbReference type="Pfam" id="PF00009">
    <property type="entry name" value="GTP_EFTU"/>
    <property type="match status" value="1"/>
</dbReference>
<dbReference type="Pfam" id="PF03144">
    <property type="entry name" value="GTP_EFTU_D2"/>
    <property type="match status" value="1"/>
</dbReference>
<dbReference type="Pfam" id="PF11987">
    <property type="entry name" value="IF-2"/>
    <property type="match status" value="1"/>
</dbReference>
<dbReference type="Pfam" id="PF08364">
    <property type="entry name" value="IF2_assoc"/>
    <property type="match status" value="1"/>
</dbReference>
<dbReference type="Pfam" id="PF04760">
    <property type="entry name" value="IF2_N"/>
    <property type="match status" value="2"/>
</dbReference>
<dbReference type="SUPFAM" id="SSF52156">
    <property type="entry name" value="Initiation factor IF2/eIF5b, domain 3"/>
    <property type="match status" value="1"/>
</dbReference>
<dbReference type="SUPFAM" id="SSF52540">
    <property type="entry name" value="P-loop containing nucleoside triphosphate hydrolases"/>
    <property type="match status" value="1"/>
</dbReference>
<dbReference type="SUPFAM" id="SSF46955">
    <property type="entry name" value="Putative DNA-binding domain"/>
    <property type="match status" value="1"/>
</dbReference>
<dbReference type="SUPFAM" id="SSF50447">
    <property type="entry name" value="Translation proteins"/>
    <property type="match status" value="2"/>
</dbReference>
<dbReference type="PROSITE" id="PS51722">
    <property type="entry name" value="G_TR_2"/>
    <property type="match status" value="1"/>
</dbReference>
<dbReference type="PROSITE" id="PS01176">
    <property type="entry name" value="IF2"/>
    <property type="match status" value="1"/>
</dbReference>
<feature type="chain" id="PRO_1000117331" description="Translation initiation factor IF-2">
    <location>
        <begin position="1"/>
        <end position="890"/>
    </location>
</feature>
<feature type="domain" description="tr-type G">
    <location>
        <begin position="389"/>
        <end position="558"/>
    </location>
</feature>
<feature type="region of interest" description="Disordered" evidence="3">
    <location>
        <begin position="45"/>
        <end position="304"/>
    </location>
</feature>
<feature type="region of interest" description="G1" evidence="1">
    <location>
        <begin position="398"/>
        <end position="405"/>
    </location>
</feature>
<feature type="region of interest" description="G2" evidence="1">
    <location>
        <begin position="423"/>
        <end position="427"/>
    </location>
</feature>
<feature type="region of interest" description="G3" evidence="1">
    <location>
        <begin position="444"/>
        <end position="447"/>
    </location>
</feature>
<feature type="region of interest" description="G4" evidence="1">
    <location>
        <begin position="498"/>
        <end position="501"/>
    </location>
</feature>
<feature type="region of interest" description="G5" evidence="1">
    <location>
        <begin position="534"/>
        <end position="536"/>
    </location>
</feature>
<feature type="compositionally biased region" description="Polar residues" evidence="3">
    <location>
        <begin position="67"/>
        <end position="81"/>
    </location>
</feature>
<feature type="compositionally biased region" description="Basic and acidic residues" evidence="3">
    <location>
        <begin position="92"/>
        <end position="217"/>
    </location>
</feature>
<feature type="compositionally biased region" description="Basic residues" evidence="3">
    <location>
        <begin position="252"/>
        <end position="266"/>
    </location>
</feature>
<feature type="compositionally biased region" description="Basic and acidic residues" evidence="3">
    <location>
        <begin position="267"/>
        <end position="280"/>
    </location>
</feature>
<feature type="binding site" evidence="2">
    <location>
        <begin position="398"/>
        <end position="405"/>
    </location>
    <ligand>
        <name>GTP</name>
        <dbReference type="ChEBI" id="CHEBI:37565"/>
    </ligand>
</feature>
<feature type="binding site" evidence="2">
    <location>
        <begin position="444"/>
        <end position="448"/>
    </location>
    <ligand>
        <name>GTP</name>
        <dbReference type="ChEBI" id="CHEBI:37565"/>
    </ligand>
</feature>
<feature type="binding site" evidence="2">
    <location>
        <begin position="498"/>
        <end position="501"/>
    </location>
    <ligand>
        <name>GTP</name>
        <dbReference type="ChEBI" id="CHEBI:37565"/>
    </ligand>
</feature>
<feature type="modified residue" description="N6-acetyllysine" evidence="1">
    <location>
        <position position="808"/>
    </location>
</feature>
<proteinExistence type="inferred from homology"/>
<accession>B7NDF4</accession>
<sequence length="890" mass="97350">MTDVTIKTLAAERQTSVERLVQQFADAGIRKSADDSVSAQEKQTLIDHLNQKNSGPDKLTLQRKTRSTLNIPGTGGKSKSVQIEVRKKRTFVKRDPQEAERLAAEEQAQREAEEQARREAEESAKREAQQKAEREAAEQAKREAAEQAKREAAEKDKVSNQQDDMTKNAQAEKARREQEAAELKRKAEEEARRKLEEEARRVAEEARRMAEENKWTDNAEPTEDSSDYHVTTSQHARQAEDESDREVEGGRGRGRNAKAARPKKGNKHAESKADREEARAAVRGGKGGKRKGSSLQQGFQKPAQAVNRDVVIGETITVGELANKMAVKGSQVIKAMMKLGAMATINQVIDQETAQLVAEEMGHKVILRRENELEEAVMSDRDTGAAAEPRAPVVTIMGHVDHGKTSLLDYIRSTKVASGEAGGITQHIGAYHVETENGMITFLDTPGHAAFTSMRARGAQATDIVVLVVAADDGVMPQTIEAIQHAKAAQVPVVVAVNKIDKPEADPDRVKNELSQYGILPEEWGGESQFVHVSAKAGTGIDELLDAILLQAEVLELKAVRKGMASGAVIESFLDKGRGPVATVLVREGTLHKGDIVLCGFEYGRVRAMRNELGQEVLEAGPSIPVEILGLSGVPAAGDEVTVVRDEKKAREVALYRQGKFREVKLARQQKSKLENMFANMTEGEVHEVNIVLKADVQGSVEAISDSLLKLSTDEVKVKIIGSGVGGITETDATLAAASNAILVGFNVRADASARKVIEAESLDLRYYSVIYNLIDEVKAAMSGMLSPELKQQIIGLAEVRDVFKSPKFGAIAGCMVTEGVVKRHNPIRVLRDNVVIYEGELESLRRFKDDVNEVRNGMECGIGVKNYNDVRTGDVIEVFEIIEIQRTIA</sequence>